<reference key="1">
    <citation type="journal article" date="2005" name="Nature">
        <title>The genome of the social amoeba Dictyostelium discoideum.</title>
        <authorList>
            <person name="Eichinger L."/>
            <person name="Pachebat J.A."/>
            <person name="Gloeckner G."/>
            <person name="Rajandream M.A."/>
            <person name="Sucgang R."/>
            <person name="Berriman M."/>
            <person name="Song J."/>
            <person name="Olsen R."/>
            <person name="Szafranski K."/>
            <person name="Xu Q."/>
            <person name="Tunggal B."/>
            <person name="Kummerfeld S."/>
            <person name="Madera M."/>
            <person name="Konfortov B.A."/>
            <person name="Rivero F."/>
            <person name="Bankier A.T."/>
            <person name="Lehmann R."/>
            <person name="Hamlin N."/>
            <person name="Davies R."/>
            <person name="Gaudet P."/>
            <person name="Fey P."/>
            <person name="Pilcher K."/>
            <person name="Chen G."/>
            <person name="Saunders D."/>
            <person name="Sodergren E.J."/>
            <person name="Davis P."/>
            <person name="Kerhornou A."/>
            <person name="Nie X."/>
            <person name="Hall N."/>
            <person name="Anjard C."/>
            <person name="Hemphill L."/>
            <person name="Bason N."/>
            <person name="Farbrother P."/>
            <person name="Desany B."/>
            <person name="Just E."/>
            <person name="Morio T."/>
            <person name="Rost R."/>
            <person name="Churcher C.M."/>
            <person name="Cooper J."/>
            <person name="Haydock S."/>
            <person name="van Driessche N."/>
            <person name="Cronin A."/>
            <person name="Goodhead I."/>
            <person name="Muzny D.M."/>
            <person name="Mourier T."/>
            <person name="Pain A."/>
            <person name="Lu M."/>
            <person name="Harper D."/>
            <person name="Lindsay R."/>
            <person name="Hauser H."/>
            <person name="James K.D."/>
            <person name="Quiles M."/>
            <person name="Madan Babu M."/>
            <person name="Saito T."/>
            <person name="Buchrieser C."/>
            <person name="Wardroper A."/>
            <person name="Felder M."/>
            <person name="Thangavelu M."/>
            <person name="Johnson D."/>
            <person name="Knights A."/>
            <person name="Loulseged H."/>
            <person name="Mungall K.L."/>
            <person name="Oliver K."/>
            <person name="Price C."/>
            <person name="Quail M.A."/>
            <person name="Urushihara H."/>
            <person name="Hernandez J."/>
            <person name="Rabbinowitsch E."/>
            <person name="Steffen D."/>
            <person name="Sanders M."/>
            <person name="Ma J."/>
            <person name="Kohara Y."/>
            <person name="Sharp S."/>
            <person name="Simmonds M.N."/>
            <person name="Spiegler S."/>
            <person name="Tivey A."/>
            <person name="Sugano S."/>
            <person name="White B."/>
            <person name="Walker D."/>
            <person name="Woodward J.R."/>
            <person name="Winckler T."/>
            <person name="Tanaka Y."/>
            <person name="Shaulsky G."/>
            <person name="Schleicher M."/>
            <person name="Weinstock G.M."/>
            <person name="Rosenthal A."/>
            <person name="Cox E.C."/>
            <person name="Chisholm R.L."/>
            <person name="Gibbs R.A."/>
            <person name="Loomis W.F."/>
            <person name="Platzer M."/>
            <person name="Kay R.R."/>
            <person name="Williams J.G."/>
            <person name="Dear P.H."/>
            <person name="Noegel A.A."/>
            <person name="Barrell B.G."/>
            <person name="Kuspa A."/>
        </authorList>
    </citation>
    <scope>NUCLEOTIDE SEQUENCE [LARGE SCALE GENOMIC DNA]</scope>
    <source>
        <strain>AX4</strain>
    </source>
</reference>
<reference evidence="7 8" key="2">
    <citation type="journal article" date="1990" name="Biochemistry">
        <title>A shared internal threonine-glutamic acid-threonine-proline repeat defines a family of Dictyostelium discoideum spore germination specific proteins.</title>
        <authorList>
            <person name="Giorda R."/>
            <person name="Ohmachi T."/>
            <person name="Shaw D.R."/>
            <person name="Ennis H.L."/>
        </authorList>
    </citation>
    <scope>NUCLEOTIDE SEQUENCE [GENOMIC DNA] OF 253-671</scope>
    <source>
        <strain evidence="8">AX3 / DH1</strain>
    </source>
</reference>
<dbReference type="EC" id="2.7.11.1"/>
<dbReference type="EMBL" id="AAFI02000089">
    <property type="protein sequence ID" value="EAL64069.1"/>
    <property type="molecule type" value="Genomic_DNA"/>
</dbReference>
<dbReference type="EMBL" id="U20661">
    <property type="protein sequence ID" value="AAB54076.1"/>
    <property type="status" value="ALT_SEQ"/>
    <property type="molecule type" value="Genomic_DNA"/>
</dbReference>
<dbReference type="EMBL" id="U20661">
    <property type="protein sequence ID" value="AAB54079.1"/>
    <property type="status" value="ALT_SEQ"/>
    <property type="molecule type" value="Genomic_DNA"/>
</dbReference>
<dbReference type="RefSeq" id="XP_637583.1">
    <property type="nucleotide sequence ID" value="XM_632491.1"/>
</dbReference>
<dbReference type="SMR" id="Q54LH8"/>
<dbReference type="STRING" id="44689.Q54LH8"/>
<dbReference type="GlyGen" id="Q54LH8">
    <property type="glycosylation" value="1 site"/>
</dbReference>
<dbReference type="PaxDb" id="44689-DDB0229378"/>
<dbReference type="EnsemblProtists" id="EAL64069">
    <property type="protein sequence ID" value="EAL64069"/>
    <property type="gene ID" value="DDB_G0286627"/>
</dbReference>
<dbReference type="GeneID" id="8625723"/>
<dbReference type="KEGG" id="ddi:DDB_G0286627"/>
<dbReference type="dictyBase" id="DDB_G0286627"/>
<dbReference type="VEuPathDB" id="AmoebaDB:DDB_G0286627"/>
<dbReference type="eggNOG" id="KOG0201">
    <property type="taxonomic scope" value="Eukaryota"/>
</dbReference>
<dbReference type="HOGENOM" id="CLU_409639_0_0_1"/>
<dbReference type="InParanoid" id="Q54LH8"/>
<dbReference type="PhylomeDB" id="Q54LH8"/>
<dbReference type="PRO" id="PR:Q54LH8"/>
<dbReference type="Proteomes" id="UP000002195">
    <property type="component" value="Chromosome 4"/>
</dbReference>
<dbReference type="GO" id="GO:0005737">
    <property type="term" value="C:cytoplasm"/>
    <property type="evidence" value="ECO:0000318"/>
    <property type="project" value="GO_Central"/>
</dbReference>
<dbReference type="GO" id="GO:0016020">
    <property type="term" value="C:membrane"/>
    <property type="evidence" value="ECO:0007669"/>
    <property type="project" value="UniProtKB-SubCell"/>
</dbReference>
<dbReference type="GO" id="GO:0005524">
    <property type="term" value="F:ATP binding"/>
    <property type="evidence" value="ECO:0007669"/>
    <property type="project" value="UniProtKB-KW"/>
</dbReference>
<dbReference type="GO" id="GO:0046872">
    <property type="term" value="F:metal ion binding"/>
    <property type="evidence" value="ECO:0007669"/>
    <property type="project" value="UniProtKB-KW"/>
</dbReference>
<dbReference type="GO" id="GO:0106310">
    <property type="term" value="F:protein serine kinase activity"/>
    <property type="evidence" value="ECO:0007669"/>
    <property type="project" value="RHEA"/>
</dbReference>
<dbReference type="GO" id="GO:0004674">
    <property type="term" value="F:protein serine/threonine kinase activity"/>
    <property type="evidence" value="ECO:0007669"/>
    <property type="project" value="UniProtKB-KW"/>
</dbReference>
<dbReference type="GO" id="GO:0007224">
    <property type="term" value="P:smoothened signaling pathway"/>
    <property type="evidence" value="ECO:0000318"/>
    <property type="project" value="GO_Central"/>
</dbReference>
<dbReference type="CDD" id="cd00180">
    <property type="entry name" value="PKc"/>
    <property type="match status" value="1"/>
</dbReference>
<dbReference type="Gene3D" id="1.10.510.10">
    <property type="entry name" value="Transferase(Phosphotransferase) domain 1"/>
    <property type="match status" value="1"/>
</dbReference>
<dbReference type="InterPro" id="IPR011009">
    <property type="entry name" value="Kinase-like_dom_sf"/>
</dbReference>
<dbReference type="InterPro" id="IPR000719">
    <property type="entry name" value="Prot_kinase_dom"/>
</dbReference>
<dbReference type="InterPro" id="IPR008271">
    <property type="entry name" value="Ser/Thr_kinase_AS"/>
</dbReference>
<dbReference type="PANTHER" id="PTHR22983">
    <property type="entry name" value="PROTEIN KINASE RELATED"/>
    <property type="match status" value="1"/>
</dbReference>
<dbReference type="PANTHER" id="PTHR22983:SF6">
    <property type="entry name" value="SERINE_THREONINE-PROTEIN KINASE 36"/>
    <property type="match status" value="1"/>
</dbReference>
<dbReference type="Pfam" id="PF00069">
    <property type="entry name" value="Pkinase"/>
    <property type="match status" value="1"/>
</dbReference>
<dbReference type="SMART" id="SM00220">
    <property type="entry name" value="S_TKc"/>
    <property type="match status" value="1"/>
</dbReference>
<dbReference type="SUPFAM" id="SSF56112">
    <property type="entry name" value="Protein kinase-like (PK-like)"/>
    <property type="match status" value="1"/>
</dbReference>
<dbReference type="PROSITE" id="PS50011">
    <property type="entry name" value="PROTEIN_KINASE_DOM"/>
    <property type="match status" value="1"/>
</dbReference>
<dbReference type="PROSITE" id="PS00108">
    <property type="entry name" value="PROTEIN_KINASE_ST"/>
    <property type="match status" value="1"/>
</dbReference>
<evidence type="ECO:0000250" key="1">
    <source>
        <dbReference type="UniProtKB" id="P28523"/>
    </source>
</evidence>
<evidence type="ECO:0000250" key="2">
    <source>
        <dbReference type="UniProtKB" id="Q869N2"/>
    </source>
</evidence>
<evidence type="ECO:0000255" key="3"/>
<evidence type="ECO:0000255" key="4">
    <source>
        <dbReference type="PROSITE-ProRule" id="PRU00159"/>
    </source>
</evidence>
<evidence type="ECO:0000255" key="5">
    <source>
        <dbReference type="PROSITE-ProRule" id="PRU10027"/>
    </source>
</evidence>
<evidence type="ECO:0000256" key="6">
    <source>
        <dbReference type="SAM" id="MobiDB-lite"/>
    </source>
</evidence>
<evidence type="ECO:0000305" key="7"/>
<evidence type="ECO:0000312" key="8">
    <source>
        <dbReference type="EMBL" id="AAB54076.1"/>
    </source>
</evidence>
<name>Y6627_DICDI</name>
<accession>Q54LH8</accession>
<accession>Q23852</accession>
<accession>Q23853</accession>
<proteinExistence type="inferred from homology"/>
<keyword id="KW-0067">ATP-binding</keyword>
<keyword id="KW-0418">Kinase</keyword>
<keyword id="KW-0460">Magnesium</keyword>
<keyword id="KW-0472">Membrane</keyword>
<keyword id="KW-0479">Metal-binding</keyword>
<keyword id="KW-0547">Nucleotide-binding</keyword>
<keyword id="KW-1185">Reference proteome</keyword>
<keyword id="KW-0723">Serine/threonine-protein kinase</keyword>
<keyword id="KW-0808">Transferase</keyword>
<keyword id="KW-0812">Transmembrane</keyword>
<keyword id="KW-1133">Transmembrane helix</keyword>
<comment type="catalytic activity">
    <reaction evidence="2">
        <text>L-seryl-[protein] + ATP = O-phospho-L-seryl-[protein] + ADP + H(+)</text>
        <dbReference type="Rhea" id="RHEA:17989"/>
        <dbReference type="Rhea" id="RHEA-COMP:9863"/>
        <dbReference type="Rhea" id="RHEA-COMP:11604"/>
        <dbReference type="ChEBI" id="CHEBI:15378"/>
        <dbReference type="ChEBI" id="CHEBI:29999"/>
        <dbReference type="ChEBI" id="CHEBI:30616"/>
        <dbReference type="ChEBI" id="CHEBI:83421"/>
        <dbReference type="ChEBI" id="CHEBI:456216"/>
        <dbReference type="EC" id="2.7.11.1"/>
    </reaction>
</comment>
<comment type="catalytic activity">
    <reaction evidence="2">
        <text>L-threonyl-[protein] + ATP = O-phospho-L-threonyl-[protein] + ADP + H(+)</text>
        <dbReference type="Rhea" id="RHEA:46608"/>
        <dbReference type="Rhea" id="RHEA-COMP:11060"/>
        <dbReference type="Rhea" id="RHEA-COMP:11605"/>
        <dbReference type="ChEBI" id="CHEBI:15378"/>
        <dbReference type="ChEBI" id="CHEBI:30013"/>
        <dbReference type="ChEBI" id="CHEBI:30616"/>
        <dbReference type="ChEBI" id="CHEBI:61977"/>
        <dbReference type="ChEBI" id="CHEBI:456216"/>
        <dbReference type="EC" id="2.7.11.1"/>
    </reaction>
</comment>
<comment type="cofactor">
    <cofactor evidence="2">
        <name>Mg(2+)</name>
        <dbReference type="ChEBI" id="CHEBI:18420"/>
    </cofactor>
</comment>
<comment type="subcellular location">
    <subcellularLocation>
        <location evidence="3">Membrane</location>
        <topology evidence="3">Single-pass membrane protein</topology>
    </subcellularLocation>
</comment>
<comment type="similarity">
    <text evidence="2">Belongs to the protein kinase superfamily. STE Ser/Thr protein kinase family.</text>
</comment>
<comment type="sequence caution" evidence="7">
    <conflict type="erroneous gene model prediction">
        <sequence resource="EMBL-CDS" id="AAB54076"/>
    </conflict>
</comment>
<comment type="sequence caution" evidence="7">
    <conflict type="erroneous gene model prediction">
        <sequence resource="EMBL-CDS" id="AAB54079"/>
    </conflict>
</comment>
<feature type="chain" id="PRO_0000371252" description="Probable serine/threonine-protein kinase DDB_G0286627">
    <location>
        <begin position="1"/>
        <end position="671"/>
    </location>
</feature>
<feature type="transmembrane region" description="Helical" evidence="3">
    <location>
        <begin position="369"/>
        <end position="389"/>
    </location>
</feature>
<feature type="domain" description="Protein kinase" evidence="4">
    <location>
        <begin position="31"/>
        <end position="283"/>
    </location>
</feature>
<feature type="region of interest" description="Disordered" evidence="6">
    <location>
        <begin position="410"/>
        <end position="523"/>
    </location>
</feature>
<feature type="compositionally biased region" description="Low complexity" evidence="6">
    <location>
        <begin position="427"/>
        <end position="490"/>
    </location>
</feature>
<feature type="compositionally biased region" description="Pro residues" evidence="6">
    <location>
        <begin position="491"/>
        <end position="513"/>
    </location>
</feature>
<feature type="active site" description="Proton acceptor" evidence="1 4 5">
    <location>
        <position position="148"/>
    </location>
</feature>
<feature type="binding site" evidence="1 4">
    <location>
        <begin position="37"/>
        <end position="45"/>
    </location>
    <ligand>
        <name>ATP</name>
        <dbReference type="ChEBI" id="CHEBI:30616"/>
    </ligand>
</feature>
<feature type="binding site" evidence="1 4">
    <location>
        <position position="61"/>
    </location>
    <ligand>
        <name>ATP</name>
        <dbReference type="ChEBI" id="CHEBI:30616"/>
    </ligand>
</feature>
<feature type="sequence conflict" description="In Ref. 2; AAB54079." evidence="7" ref="2">
    <original>GPN</original>
    <variation>LMV</variation>
    <location>
        <begin position="669"/>
        <end position="671"/>
    </location>
</feature>
<protein>
    <recommendedName>
        <fullName>Probable serine/threonine-protein kinase DDB_G0286627</fullName>
        <ecNumber>2.7.11.1</ecNumber>
    </recommendedName>
</protein>
<gene>
    <name type="ORF">DDB_G0286627</name>
</gene>
<organism>
    <name type="scientific">Dictyostelium discoideum</name>
    <name type="common">Social amoeba</name>
    <dbReference type="NCBI Taxonomy" id="44689"/>
    <lineage>
        <taxon>Eukaryota</taxon>
        <taxon>Amoebozoa</taxon>
        <taxon>Evosea</taxon>
        <taxon>Eumycetozoa</taxon>
        <taxon>Dictyostelia</taxon>
        <taxon>Dictyosteliales</taxon>
        <taxon>Dictyosteliaceae</taxon>
        <taxon>Dictyostelium</taxon>
    </lineage>
</organism>
<sequence length="671" mass="77102">MTDKYNDWVKNKKHNNYNMAEDPLYYIKSNWVIERQLSKGSFGQVYKAHKKLDPNFVCAIKVIQYCKFTMKEVDYLKKLNDPKFVKYYSLEFNNSKTYAYIIMEFIEGESMKSIIENKKFSDIEIKEIIKELLKALVYLNDKGIMHRDLKPENIMFQNQNQNQNQNNKINLKLIDFGLSKAINENIINKTVKLQTISSVGTTLYMAPEILLNNKGSNSSLDIWSLGCIIVEMKWGLNQLCLQRPNNIPVFPVNSLFTEILNLCFQTEPSKRIKSHQLIKHPFFNDENEQFYNDNKEYFDFLKENERDSYIEIHNTESIGSNSTCSINEIRFENLYLIQSTYENQYPIKTITLHEKYTGISKLSHLNSKFKIIYLFLILLFLMTILVNLNRHVQTKFSIIQRDNIFLSITPESNPIKKPSPTQSSDYNQYSEGSQSSYESSSSSESSSESSSSESSSSESSSSSESQSSEINYSSNSNDLQPTDSSTTDPPVTDPPITDPPITDPPVTDPPITEPPVTETPKPTINPFFNTPVFICSQKIDQCLTVLNSQDLEFIDKKGRDQSMVLEYDGNAEQTFSIREKGGMYICLSGEHYHFSEKLKGRLNANKDGRDCTFNLITQFNIDKQANLYSFRSPNDQYIQSDETTRFISTKPGGLGSQSQFFIYFSHSLGPN</sequence>